<reference key="1">
    <citation type="journal article" date="2011" name="J. Bacteriol.">
        <title>Comparative genomics of 28 Salmonella enterica isolates: evidence for CRISPR-mediated adaptive sublineage evolution.</title>
        <authorList>
            <person name="Fricke W.F."/>
            <person name="Mammel M.K."/>
            <person name="McDermott P.F."/>
            <person name="Tartera C."/>
            <person name="White D.G."/>
            <person name="Leclerc J.E."/>
            <person name="Ravel J."/>
            <person name="Cebula T.A."/>
        </authorList>
    </citation>
    <scope>NUCLEOTIDE SEQUENCE [LARGE SCALE GENOMIC DNA]</scope>
    <source>
        <strain>SL254</strain>
    </source>
</reference>
<keyword id="KW-0378">Hydrolase</keyword>
<protein>
    <recommendedName>
        <fullName evidence="1">RNA pyrophosphohydrolase</fullName>
        <ecNumber evidence="1">3.6.1.-</ecNumber>
    </recommendedName>
    <alternativeName>
        <fullName evidence="1">(Di)nucleoside polyphosphate hydrolase</fullName>
    </alternativeName>
</protein>
<proteinExistence type="inferred from homology"/>
<accession>B4T4Z7</accession>
<comment type="function">
    <text evidence="1">Accelerates the degradation of transcripts by removing pyrophosphate from the 5'-end of triphosphorylated RNA, leading to a more labile monophosphorylated state that can stimulate subsequent ribonuclease cleavage.</text>
</comment>
<comment type="cofactor">
    <cofactor evidence="1">
        <name>a divalent metal cation</name>
        <dbReference type="ChEBI" id="CHEBI:60240"/>
    </cofactor>
</comment>
<comment type="similarity">
    <text evidence="1">Belongs to the Nudix hydrolase family. RppH subfamily.</text>
</comment>
<feature type="chain" id="PRO_1000115296" description="RNA pyrophosphohydrolase">
    <location>
        <begin position="1"/>
        <end position="176"/>
    </location>
</feature>
<feature type="domain" description="Nudix hydrolase" evidence="1">
    <location>
        <begin position="6"/>
        <end position="149"/>
    </location>
</feature>
<feature type="short sequence motif" description="Nudix box">
    <location>
        <begin position="38"/>
        <end position="59"/>
    </location>
</feature>
<organism>
    <name type="scientific">Salmonella newport (strain SL254)</name>
    <dbReference type="NCBI Taxonomy" id="423368"/>
    <lineage>
        <taxon>Bacteria</taxon>
        <taxon>Pseudomonadati</taxon>
        <taxon>Pseudomonadota</taxon>
        <taxon>Gammaproteobacteria</taxon>
        <taxon>Enterobacterales</taxon>
        <taxon>Enterobacteriaceae</taxon>
        <taxon>Salmonella</taxon>
    </lineage>
</organism>
<gene>
    <name evidence="1" type="primary">rppH</name>
    <name evidence="1" type="synonym">nudH</name>
    <name type="ordered locus">SNSL254_A3232</name>
</gene>
<dbReference type="EC" id="3.6.1.-" evidence="1"/>
<dbReference type="EMBL" id="CP001113">
    <property type="protein sequence ID" value="ACF65327.1"/>
    <property type="molecule type" value="Genomic_DNA"/>
</dbReference>
<dbReference type="RefSeq" id="WP_000564481.1">
    <property type="nucleotide sequence ID" value="NZ_CCMR01000001.1"/>
</dbReference>
<dbReference type="SMR" id="B4T4Z7"/>
<dbReference type="KEGG" id="see:SNSL254_A3232"/>
<dbReference type="HOGENOM" id="CLU_087195_3_2_6"/>
<dbReference type="Proteomes" id="UP000008824">
    <property type="component" value="Chromosome"/>
</dbReference>
<dbReference type="GO" id="GO:0005737">
    <property type="term" value="C:cytoplasm"/>
    <property type="evidence" value="ECO:0007669"/>
    <property type="project" value="TreeGrafter"/>
</dbReference>
<dbReference type="GO" id="GO:0034353">
    <property type="term" value="F:mRNA 5'-diphosphatase activity"/>
    <property type="evidence" value="ECO:0007669"/>
    <property type="project" value="TreeGrafter"/>
</dbReference>
<dbReference type="GO" id="GO:0006402">
    <property type="term" value="P:mRNA catabolic process"/>
    <property type="evidence" value="ECO:0007669"/>
    <property type="project" value="TreeGrafter"/>
</dbReference>
<dbReference type="CDD" id="cd03671">
    <property type="entry name" value="NUDIX_Ap4A_hydrolase_plant_like"/>
    <property type="match status" value="1"/>
</dbReference>
<dbReference type="FunFam" id="3.90.79.10:FF:000001">
    <property type="entry name" value="RNA pyrophosphohydrolase"/>
    <property type="match status" value="1"/>
</dbReference>
<dbReference type="Gene3D" id="3.90.79.10">
    <property type="entry name" value="Nucleoside Triphosphate Pyrophosphohydrolase"/>
    <property type="match status" value="1"/>
</dbReference>
<dbReference type="HAMAP" id="MF_00298">
    <property type="entry name" value="Nudix_RppH"/>
    <property type="match status" value="1"/>
</dbReference>
<dbReference type="InterPro" id="IPR020476">
    <property type="entry name" value="Nudix_hydrolase"/>
</dbReference>
<dbReference type="InterPro" id="IPR015797">
    <property type="entry name" value="NUDIX_hydrolase-like_dom_sf"/>
</dbReference>
<dbReference type="InterPro" id="IPR020084">
    <property type="entry name" value="NUDIX_hydrolase_CS"/>
</dbReference>
<dbReference type="InterPro" id="IPR000086">
    <property type="entry name" value="NUDIX_hydrolase_dom"/>
</dbReference>
<dbReference type="InterPro" id="IPR022927">
    <property type="entry name" value="RppH"/>
</dbReference>
<dbReference type="NCBIfam" id="NF001934">
    <property type="entry name" value="PRK00714.1-1"/>
    <property type="match status" value="1"/>
</dbReference>
<dbReference type="NCBIfam" id="NF001937">
    <property type="entry name" value="PRK00714.1-4"/>
    <property type="match status" value="1"/>
</dbReference>
<dbReference type="NCBIfam" id="NF001938">
    <property type="entry name" value="PRK00714.1-5"/>
    <property type="match status" value="1"/>
</dbReference>
<dbReference type="PANTHER" id="PTHR23114">
    <property type="entry name" value="M7GPPPN-MRNA HYDROLASE"/>
    <property type="match status" value="1"/>
</dbReference>
<dbReference type="PANTHER" id="PTHR23114:SF17">
    <property type="entry name" value="M7GPPPN-MRNA HYDROLASE"/>
    <property type="match status" value="1"/>
</dbReference>
<dbReference type="Pfam" id="PF00293">
    <property type="entry name" value="NUDIX"/>
    <property type="match status" value="1"/>
</dbReference>
<dbReference type="PRINTS" id="PR00502">
    <property type="entry name" value="NUDIXFAMILY"/>
</dbReference>
<dbReference type="SUPFAM" id="SSF55811">
    <property type="entry name" value="Nudix"/>
    <property type="match status" value="1"/>
</dbReference>
<dbReference type="PROSITE" id="PS51462">
    <property type="entry name" value="NUDIX"/>
    <property type="match status" value="1"/>
</dbReference>
<dbReference type="PROSITE" id="PS00893">
    <property type="entry name" value="NUDIX_BOX"/>
    <property type="match status" value="1"/>
</dbReference>
<name>RPPH_SALNS</name>
<evidence type="ECO:0000255" key="1">
    <source>
        <dbReference type="HAMAP-Rule" id="MF_00298"/>
    </source>
</evidence>
<sequence length="176" mass="20806">MIDDDGYRPNVGIVICNRQGQVMWARRFGQHSWQFPQGGINPGESAEQAMYRELFEEVGLSRKDVRILASTRNWLRYKLPKRLVRWDTKPVCIGQKQKWFLLQLMSADAEINMQTSSTPEFDGWRWVSYWYPVRQVVSFKRDVYRRVMKEFASVVMALQDNPPKLQSAPAYRRKRG</sequence>